<evidence type="ECO:0000255" key="1">
    <source>
        <dbReference type="HAMAP-Rule" id="MF_00054"/>
    </source>
</evidence>
<comment type="function">
    <text evidence="1">Catalyzes the GTP-dependent ribosomal translocation step during translation elongation. During this step, the ribosome changes from the pre-translocational (PRE) to the post-translocational (POST) state as the newly formed A-site-bound peptidyl-tRNA and P-site-bound deacylated tRNA move to the P and E sites, respectively. Catalyzes the coordinated movement of the two tRNA molecules, the mRNA and conformational changes in the ribosome.</text>
</comment>
<comment type="subcellular location">
    <subcellularLocation>
        <location evidence="1">Cytoplasm</location>
    </subcellularLocation>
</comment>
<comment type="similarity">
    <text evidence="1">Belongs to the TRAFAC class translation factor GTPase superfamily. Classic translation factor GTPase family. EF-G/EF-2 subfamily.</text>
</comment>
<dbReference type="EMBL" id="CP001079">
    <property type="protein sequence ID" value="ACM49065.1"/>
    <property type="molecule type" value="Genomic_DNA"/>
</dbReference>
<dbReference type="SMR" id="B9KHV3"/>
<dbReference type="STRING" id="320483.AMF_185"/>
<dbReference type="KEGG" id="amf:AMF_185"/>
<dbReference type="eggNOG" id="COG0480">
    <property type="taxonomic scope" value="Bacteria"/>
</dbReference>
<dbReference type="HOGENOM" id="CLU_002794_4_1_5"/>
<dbReference type="Proteomes" id="UP000007307">
    <property type="component" value="Chromosome"/>
</dbReference>
<dbReference type="GO" id="GO:0005737">
    <property type="term" value="C:cytoplasm"/>
    <property type="evidence" value="ECO:0007669"/>
    <property type="project" value="UniProtKB-SubCell"/>
</dbReference>
<dbReference type="GO" id="GO:0005525">
    <property type="term" value="F:GTP binding"/>
    <property type="evidence" value="ECO:0007669"/>
    <property type="project" value="UniProtKB-UniRule"/>
</dbReference>
<dbReference type="GO" id="GO:0003924">
    <property type="term" value="F:GTPase activity"/>
    <property type="evidence" value="ECO:0007669"/>
    <property type="project" value="InterPro"/>
</dbReference>
<dbReference type="GO" id="GO:0003746">
    <property type="term" value="F:translation elongation factor activity"/>
    <property type="evidence" value="ECO:0007669"/>
    <property type="project" value="UniProtKB-UniRule"/>
</dbReference>
<dbReference type="GO" id="GO:0032790">
    <property type="term" value="P:ribosome disassembly"/>
    <property type="evidence" value="ECO:0007669"/>
    <property type="project" value="TreeGrafter"/>
</dbReference>
<dbReference type="CDD" id="cd01886">
    <property type="entry name" value="EF-G"/>
    <property type="match status" value="1"/>
</dbReference>
<dbReference type="CDD" id="cd16262">
    <property type="entry name" value="EFG_III"/>
    <property type="match status" value="1"/>
</dbReference>
<dbReference type="CDD" id="cd01434">
    <property type="entry name" value="EFG_mtEFG1_IV"/>
    <property type="match status" value="1"/>
</dbReference>
<dbReference type="CDD" id="cd03713">
    <property type="entry name" value="EFG_mtEFG_C"/>
    <property type="match status" value="1"/>
</dbReference>
<dbReference type="CDD" id="cd04088">
    <property type="entry name" value="EFG_mtEFG_II"/>
    <property type="match status" value="1"/>
</dbReference>
<dbReference type="FunFam" id="2.40.30.10:FF:000006">
    <property type="entry name" value="Elongation factor G"/>
    <property type="match status" value="1"/>
</dbReference>
<dbReference type="FunFam" id="3.30.230.10:FF:000003">
    <property type="entry name" value="Elongation factor G"/>
    <property type="match status" value="1"/>
</dbReference>
<dbReference type="FunFam" id="3.30.70.240:FF:000001">
    <property type="entry name" value="Elongation factor G"/>
    <property type="match status" value="1"/>
</dbReference>
<dbReference type="FunFam" id="3.30.70.870:FF:000001">
    <property type="entry name" value="Elongation factor G"/>
    <property type="match status" value="1"/>
</dbReference>
<dbReference type="FunFam" id="3.40.50.300:FF:000029">
    <property type="entry name" value="Elongation factor G"/>
    <property type="match status" value="1"/>
</dbReference>
<dbReference type="Gene3D" id="3.30.230.10">
    <property type="match status" value="1"/>
</dbReference>
<dbReference type="Gene3D" id="3.30.70.240">
    <property type="match status" value="1"/>
</dbReference>
<dbReference type="Gene3D" id="3.30.70.870">
    <property type="entry name" value="Elongation Factor G (Translational Gtpase), domain 3"/>
    <property type="match status" value="1"/>
</dbReference>
<dbReference type="Gene3D" id="3.40.50.300">
    <property type="entry name" value="P-loop containing nucleotide triphosphate hydrolases"/>
    <property type="match status" value="1"/>
</dbReference>
<dbReference type="Gene3D" id="2.40.30.10">
    <property type="entry name" value="Translation factors"/>
    <property type="match status" value="1"/>
</dbReference>
<dbReference type="HAMAP" id="MF_00054_B">
    <property type="entry name" value="EF_G_EF_2_B"/>
    <property type="match status" value="1"/>
</dbReference>
<dbReference type="InterPro" id="IPR053905">
    <property type="entry name" value="EF-G-like_DII"/>
</dbReference>
<dbReference type="InterPro" id="IPR041095">
    <property type="entry name" value="EFG_II"/>
</dbReference>
<dbReference type="InterPro" id="IPR009022">
    <property type="entry name" value="EFG_III"/>
</dbReference>
<dbReference type="InterPro" id="IPR035647">
    <property type="entry name" value="EFG_III/V"/>
</dbReference>
<dbReference type="InterPro" id="IPR047872">
    <property type="entry name" value="EFG_IV"/>
</dbReference>
<dbReference type="InterPro" id="IPR035649">
    <property type="entry name" value="EFG_V"/>
</dbReference>
<dbReference type="InterPro" id="IPR000640">
    <property type="entry name" value="EFG_V-like"/>
</dbReference>
<dbReference type="InterPro" id="IPR031157">
    <property type="entry name" value="G_TR_CS"/>
</dbReference>
<dbReference type="InterPro" id="IPR027417">
    <property type="entry name" value="P-loop_NTPase"/>
</dbReference>
<dbReference type="InterPro" id="IPR020568">
    <property type="entry name" value="Ribosomal_Su5_D2-typ_SF"/>
</dbReference>
<dbReference type="InterPro" id="IPR014721">
    <property type="entry name" value="Ribsml_uS5_D2-typ_fold_subgr"/>
</dbReference>
<dbReference type="InterPro" id="IPR005225">
    <property type="entry name" value="Small_GTP-bd"/>
</dbReference>
<dbReference type="InterPro" id="IPR000795">
    <property type="entry name" value="T_Tr_GTP-bd_dom"/>
</dbReference>
<dbReference type="InterPro" id="IPR009000">
    <property type="entry name" value="Transl_B-barrel_sf"/>
</dbReference>
<dbReference type="InterPro" id="IPR004540">
    <property type="entry name" value="Transl_elong_EFG/EF2"/>
</dbReference>
<dbReference type="InterPro" id="IPR005517">
    <property type="entry name" value="Transl_elong_EFG/EF2_IV"/>
</dbReference>
<dbReference type="NCBIfam" id="TIGR00484">
    <property type="entry name" value="EF-G"/>
    <property type="match status" value="1"/>
</dbReference>
<dbReference type="NCBIfam" id="NF009381">
    <property type="entry name" value="PRK12740.1-5"/>
    <property type="match status" value="1"/>
</dbReference>
<dbReference type="NCBIfam" id="TIGR00231">
    <property type="entry name" value="small_GTP"/>
    <property type="match status" value="1"/>
</dbReference>
<dbReference type="PANTHER" id="PTHR43261:SF1">
    <property type="entry name" value="RIBOSOME-RELEASING FACTOR 2, MITOCHONDRIAL"/>
    <property type="match status" value="1"/>
</dbReference>
<dbReference type="PANTHER" id="PTHR43261">
    <property type="entry name" value="TRANSLATION ELONGATION FACTOR G-RELATED"/>
    <property type="match status" value="1"/>
</dbReference>
<dbReference type="Pfam" id="PF22042">
    <property type="entry name" value="EF-G_D2"/>
    <property type="match status" value="1"/>
</dbReference>
<dbReference type="Pfam" id="PF00679">
    <property type="entry name" value="EFG_C"/>
    <property type="match status" value="1"/>
</dbReference>
<dbReference type="Pfam" id="PF14492">
    <property type="entry name" value="EFG_III"/>
    <property type="match status" value="1"/>
</dbReference>
<dbReference type="Pfam" id="PF03764">
    <property type="entry name" value="EFG_IV"/>
    <property type="match status" value="1"/>
</dbReference>
<dbReference type="Pfam" id="PF00009">
    <property type="entry name" value="GTP_EFTU"/>
    <property type="match status" value="1"/>
</dbReference>
<dbReference type="PRINTS" id="PR00315">
    <property type="entry name" value="ELONGATNFCT"/>
</dbReference>
<dbReference type="SMART" id="SM00838">
    <property type="entry name" value="EFG_C"/>
    <property type="match status" value="1"/>
</dbReference>
<dbReference type="SMART" id="SM00889">
    <property type="entry name" value="EFG_IV"/>
    <property type="match status" value="1"/>
</dbReference>
<dbReference type="SUPFAM" id="SSF54980">
    <property type="entry name" value="EF-G C-terminal domain-like"/>
    <property type="match status" value="2"/>
</dbReference>
<dbReference type="SUPFAM" id="SSF52540">
    <property type="entry name" value="P-loop containing nucleoside triphosphate hydrolases"/>
    <property type="match status" value="1"/>
</dbReference>
<dbReference type="SUPFAM" id="SSF54211">
    <property type="entry name" value="Ribosomal protein S5 domain 2-like"/>
    <property type="match status" value="1"/>
</dbReference>
<dbReference type="SUPFAM" id="SSF50447">
    <property type="entry name" value="Translation proteins"/>
    <property type="match status" value="1"/>
</dbReference>
<dbReference type="PROSITE" id="PS00301">
    <property type="entry name" value="G_TR_1"/>
    <property type="match status" value="1"/>
</dbReference>
<dbReference type="PROSITE" id="PS51722">
    <property type="entry name" value="G_TR_2"/>
    <property type="match status" value="1"/>
</dbReference>
<organism>
    <name type="scientific">Anaplasma marginale (strain Florida)</name>
    <dbReference type="NCBI Taxonomy" id="320483"/>
    <lineage>
        <taxon>Bacteria</taxon>
        <taxon>Pseudomonadati</taxon>
        <taxon>Pseudomonadota</taxon>
        <taxon>Alphaproteobacteria</taxon>
        <taxon>Rickettsiales</taxon>
        <taxon>Anaplasmataceae</taxon>
        <taxon>Anaplasma</taxon>
    </lineage>
</organism>
<reference key="1">
    <citation type="journal article" date="2009" name="BMC Genomics">
        <title>Conservation in the face of diversity: multistrain analysis of an intracellular bacterium.</title>
        <authorList>
            <person name="Dark M.J."/>
            <person name="Herndon D.R."/>
            <person name="Kappmeyer L.S."/>
            <person name="Gonzales M.P."/>
            <person name="Nordeen E."/>
            <person name="Palmer G.H."/>
            <person name="Knowles D.P. Jr."/>
            <person name="Brayton K.A."/>
        </authorList>
    </citation>
    <scope>NUCLEOTIDE SEQUENCE [LARGE SCALE GENOMIC DNA]</scope>
    <source>
        <strain>Florida</strain>
    </source>
</reference>
<name>EFG_ANAMF</name>
<keyword id="KW-0963">Cytoplasm</keyword>
<keyword id="KW-0251">Elongation factor</keyword>
<keyword id="KW-0342">GTP-binding</keyword>
<keyword id="KW-0547">Nucleotide-binding</keyword>
<keyword id="KW-0648">Protein biosynthesis</keyword>
<keyword id="KW-1185">Reference proteome</keyword>
<sequence length="690" mass="75537">MSSKGDLSRCRNIGIMAHIDAGKTTTTERILFYTGKQNRIGEVHEGAASMDWMEQERERGITITSAATTCFWNDCRINIIDTPGHVDFTIEVERSLRVLDGAVAVFDGVAGVEPQSETVWRQADKYDVPRICFVNKMDRIGADFYACVDMIKDRLGAVPLVLQLPIGVDKSFVGVVDLVEMRSITWEEDSLGAKFNYGEIPSDLMEKAQDYRARLIESAVEMNDEAMNLYLDGGEISVPLLKSCIRSGVIGAKFVPVLCGSAFKNKGVQPLLDAVVDFLPSPSDVPTIEGASASDPQKAVTIKSSVDDKFVALAFKVMVDRFVGSLTFIRVYSGKLTGKSVVLNSAKGATESVGRILRMHANNREDISEIQAGDIAALAGLKKTTTGDTLCDQNFPVVLEKMDFPESVMEIAVEPVSTADQEKMGTALSRLVAEDPSLKVCVNSESGQTILKGMGELHLEIIVDRMKREFGVEASVGAPQVAYRETITKSAEIEYVHKKQTGGAGQFAKVNILFEPLPPGSGFEFENKITCGAIPKEYIPGVQSGLELVKETGMIAGFPVIDFKATLFDGAFHEVDSSPLAFELAAKGAFREMANKAGPVLLEPIMRVEIITPDEYMGDVIGDVNSRRGRVAEMQDRHNAKLITAFIPLGKMFGYVKDLRSMSQGRAQYSMYFARYERVPENAVDNVMKK</sequence>
<accession>B9KHV3</accession>
<feature type="chain" id="PRO_1000201429" description="Elongation factor G">
    <location>
        <begin position="1"/>
        <end position="690"/>
    </location>
</feature>
<feature type="domain" description="tr-type G">
    <location>
        <begin position="8"/>
        <end position="283"/>
    </location>
</feature>
<feature type="binding site" evidence="1">
    <location>
        <begin position="17"/>
        <end position="24"/>
    </location>
    <ligand>
        <name>GTP</name>
        <dbReference type="ChEBI" id="CHEBI:37565"/>
    </ligand>
</feature>
<feature type="binding site" evidence="1">
    <location>
        <begin position="81"/>
        <end position="85"/>
    </location>
    <ligand>
        <name>GTP</name>
        <dbReference type="ChEBI" id="CHEBI:37565"/>
    </ligand>
</feature>
<feature type="binding site" evidence="1">
    <location>
        <begin position="135"/>
        <end position="138"/>
    </location>
    <ligand>
        <name>GTP</name>
        <dbReference type="ChEBI" id="CHEBI:37565"/>
    </ligand>
</feature>
<proteinExistence type="inferred from homology"/>
<protein>
    <recommendedName>
        <fullName evidence="1">Elongation factor G</fullName>
        <shortName evidence="1">EF-G</shortName>
    </recommendedName>
</protein>
<gene>
    <name evidence="1" type="primary">fusA</name>
    <name type="ordered locus">AMF_185</name>
</gene>